<protein>
    <recommendedName>
        <fullName evidence="1">Transcriptional repressor NrdR</fullName>
    </recommendedName>
</protein>
<gene>
    <name evidence="1" type="primary">nrdR</name>
    <name type="ordered locus">Sfri_1034</name>
</gene>
<sequence>MHCPFCSATDTKVIDSRLVADGHQVRRRRECTECHERFTTFEGAELVMPRVIKRDGTRQPFDEEKLRGGMLRAVEKRPVSIDEIEQALTKIKSTLRATGEREVNSEMIGNLMMEQLMSLDKVAYIRFASVYRAFEDVSQFGEAIAKLQK</sequence>
<name>NRDR_SHEFN</name>
<comment type="function">
    <text evidence="1">Negatively regulates transcription of bacterial ribonucleotide reductase nrd genes and operons by binding to NrdR-boxes.</text>
</comment>
<comment type="cofactor">
    <cofactor evidence="1">
        <name>Zn(2+)</name>
        <dbReference type="ChEBI" id="CHEBI:29105"/>
    </cofactor>
    <text evidence="1">Binds 1 zinc ion.</text>
</comment>
<comment type="similarity">
    <text evidence="1">Belongs to the NrdR family.</text>
</comment>
<dbReference type="EMBL" id="CP000447">
    <property type="protein sequence ID" value="ABI70887.1"/>
    <property type="molecule type" value="Genomic_DNA"/>
</dbReference>
<dbReference type="RefSeq" id="WP_011636508.1">
    <property type="nucleotide sequence ID" value="NC_008345.1"/>
</dbReference>
<dbReference type="SMR" id="Q086C8"/>
<dbReference type="STRING" id="318167.Sfri_1034"/>
<dbReference type="KEGG" id="sfr:Sfri_1034"/>
<dbReference type="eggNOG" id="COG1327">
    <property type="taxonomic scope" value="Bacteria"/>
</dbReference>
<dbReference type="HOGENOM" id="CLU_108412_0_0_6"/>
<dbReference type="OrthoDB" id="9807461at2"/>
<dbReference type="Proteomes" id="UP000000684">
    <property type="component" value="Chromosome"/>
</dbReference>
<dbReference type="GO" id="GO:0005524">
    <property type="term" value="F:ATP binding"/>
    <property type="evidence" value="ECO:0007669"/>
    <property type="project" value="UniProtKB-KW"/>
</dbReference>
<dbReference type="GO" id="GO:0003677">
    <property type="term" value="F:DNA binding"/>
    <property type="evidence" value="ECO:0007669"/>
    <property type="project" value="UniProtKB-KW"/>
</dbReference>
<dbReference type="GO" id="GO:0008270">
    <property type="term" value="F:zinc ion binding"/>
    <property type="evidence" value="ECO:0007669"/>
    <property type="project" value="UniProtKB-UniRule"/>
</dbReference>
<dbReference type="GO" id="GO:0045892">
    <property type="term" value="P:negative regulation of DNA-templated transcription"/>
    <property type="evidence" value="ECO:0007669"/>
    <property type="project" value="UniProtKB-UniRule"/>
</dbReference>
<dbReference type="HAMAP" id="MF_00440">
    <property type="entry name" value="NrdR"/>
    <property type="match status" value="1"/>
</dbReference>
<dbReference type="InterPro" id="IPR005144">
    <property type="entry name" value="ATP-cone_dom"/>
</dbReference>
<dbReference type="InterPro" id="IPR055173">
    <property type="entry name" value="NrdR-like_N"/>
</dbReference>
<dbReference type="InterPro" id="IPR003796">
    <property type="entry name" value="RNR_NrdR-like"/>
</dbReference>
<dbReference type="NCBIfam" id="TIGR00244">
    <property type="entry name" value="transcriptional regulator NrdR"/>
    <property type="match status" value="1"/>
</dbReference>
<dbReference type="PANTHER" id="PTHR30455">
    <property type="entry name" value="TRANSCRIPTIONAL REPRESSOR NRDR"/>
    <property type="match status" value="1"/>
</dbReference>
<dbReference type="PANTHER" id="PTHR30455:SF2">
    <property type="entry name" value="TRANSCRIPTIONAL REPRESSOR NRDR"/>
    <property type="match status" value="1"/>
</dbReference>
<dbReference type="Pfam" id="PF03477">
    <property type="entry name" value="ATP-cone"/>
    <property type="match status" value="1"/>
</dbReference>
<dbReference type="Pfam" id="PF22811">
    <property type="entry name" value="Zn_ribbon_NrdR"/>
    <property type="match status" value="1"/>
</dbReference>
<dbReference type="PROSITE" id="PS51161">
    <property type="entry name" value="ATP_CONE"/>
    <property type="match status" value="1"/>
</dbReference>
<accession>Q086C8</accession>
<keyword id="KW-0067">ATP-binding</keyword>
<keyword id="KW-0238">DNA-binding</keyword>
<keyword id="KW-0479">Metal-binding</keyword>
<keyword id="KW-0547">Nucleotide-binding</keyword>
<keyword id="KW-1185">Reference proteome</keyword>
<keyword id="KW-0678">Repressor</keyword>
<keyword id="KW-0804">Transcription</keyword>
<keyword id="KW-0805">Transcription regulation</keyword>
<keyword id="KW-0862">Zinc</keyword>
<keyword id="KW-0863">Zinc-finger</keyword>
<feature type="chain" id="PRO_0000264209" description="Transcriptional repressor NrdR">
    <location>
        <begin position="1"/>
        <end position="149"/>
    </location>
</feature>
<feature type="domain" description="ATP-cone" evidence="1">
    <location>
        <begin position="49"/>
        <end position="139"/>
    </location>
</feature>
<feature type="zinc finger region" evidence="1">
    <location>
        <begin position="3"/>
        <end position="34"/>
    </location>
</feature>
<organism>
    <name type="scientific">Shewanella frigidimarina (strain NCIMB 400)</name>
    <dbReference type="NCBI Taxonomy" id="318167"/>
    <lineage>
        <taxon>Bacteria</taxon>
        <taxon>Pseudomonadati</taxon>
        <taxon>Pseudomonadota</taxon>
        <taxon>Gammaproteobacteria</taxon>
        <taxon>Alteromonadales</taxon>
        <taxon>Shewanellaceae</taxon>
        <taxon>Shewanella</taxon>
    </lineage>
</organism>
<evidence type="ECO:0000255" key="1">
    <source>
        <dbReference type="HAMAP-Rule" id="MF_00440"/>
    </source>
</evidence>
<proteinExistence type="inferred from homology"/>
<reference key="1">
    <citation type="submission" date="2006-08" db="EMBL/GenBank/DDBJ databases">
        <title>Complete sequence of Shewanella frigidimarina NCIMB 400.</title>
        <authorList>
            <consortium name="US DOE Joint Genome Institute"/>
            <person name="Copeland A."/>
            <person name="Lucas S."/>
            <person name="Lapidus A."/>
            <person name="Barry K."/>
            <person name="Detter J.C."/>
            <person name="Glavina del Rio T."/>
            <person name="Hammon N."/>
            <person name="Israni S."/>
            <person name="Dalin E."/>
            <person name="Tice H."/>
            <person name="Pitluck S."/>
            <person name="Fredrickson J.K."/>
            <person name="Kolker E."/>
            <person name="McCuel L.A."/>
            <person name="DiChristina T."/>
            <person name="Nealson K.H."/>
            <person name="Newman D."/>
            <person name="Tiedje J.M."/>
            <person name="Zhou J."/>
            <person name="Romine M.F."/>
            <person name="Culley D.E."/>
            <person name="Serres M."/>
            <person name="Chertkov O."/>
            <person name="Brettin T."/>
            <person name="Bruce D."/>
            <person name="Han C."/>
            <person name="Tapia R."/>
            <person name="Gilna P."/>
            <person name="Schmutz J."/>
            <person name="Larimer F."/>
            <person name="Land M."/>
            <person name="Hauser L."/>
            <person name="Kyrpides N."/>
            <person name="Mikhailova N."/>
            <person name="Richardson P."/>
        </authorList>
    </citation>
    <scope>NUCLEOTIDE SEQUENCE [LARGE SCALE GENOMIC DNA]</scope>
    <source>
        <strain>NCIMB 400</strain>
    </source>
</reference>